<feature type="chain" id="PRO_1000123231" description="N-acetyl-gamma-glutamyl-phosphate reductase">
    <location>
        <begin position="1"/>
        <end position="345"/>
    </location>
</feature>
<feature type="active site" evidence="1">
    <location>
        <position position="149"/>
    </location>
</feature>
<protein>
    <recommendedName>
        <fullName evidence="1">N-acetyl-gamma-glutamyl-phosphate reductase</fullName>
        <shortName evidence="1">AGPR</shortName>
        <ecNumber evidence="1">1.2.1.38</ecNumber>
    </recommendedName>
    <alternativeName>
        <fullName evidence="1">N-acetyl-glutamate semialdehyde dehydrogenase</fullName>
        <shortName evidence="1">NAGSA dehydrogenase</shortName>
    </alternativeName>
</protein>
<evidence type="ECO:0000255" key="1">
    <source>
        <dbReference type="HAMAP-Rule" id="MF_00150"/>
    </source>
</evidence>
<organism>
    <name type="scientific">Bacillus cereus (strain 03BB102)</name>
    <dbReference type="NCBI Taxonomy" id="572264"/>
    <lineage>
        <taxon>Bacteria</taxon>
        <taxon>Bacillati</taxon>
        <taxon>Bacillota</taxon>
        <taxon>Bacilli</taxon>
        <taxon>Bacillales</taxon>
        <taxon>Bacillaceae</taxon>
        <taxon>Bacillus</taxon>
        <taxon>Bacillus cereus group</taxon>
    </lineage>
</organism>
<proteinExistence type="inferred from homology"/>
<name>ARGC_BACC3</name>
<accession>C1ER06</accession>
<reference key="1">
    <citation type="submission" date="2009-02" db="EMBL/GenBank/DDBJ databases">
        <title>Genome sequence of Bacillus cereus 03BB102.</title>
        <authorList>
            <person name="Dodson R.J."/>
            <person name="Jackson P."/>
            <person name="Munk A.C."/>
            <person name="Brettin T."/>
            <person name="Bruce D."/>
            <person name="Detter C."/>
            <person name="Tapia R."/>
            <person name="Han C."/>
            <person name="Sutton G."/>
            <person name="Sims D."/>
        </authorList>
    </citation>
    <scope>NUCLEOTIDE SEQUENCE [LARGE SCALE GENOMIC DNA]</scope>
    <source>
        <strain>03BB102</strain>
    </source>
</reference>
<sequence>MKVAIIGATGYGGIELIRLLEQHPYFSIASLHSFSQVGECITNVYPHFQNVLVHTLQEIDVEEIEKEAEIVFLATPAGVSAELTPKLLAVGLKVIDLSGDFRMKDPFIYEQWYKRAAAKEGVLREAVYGLSEWKRSEIQKANLIANPGCFATAALLAILPLVRSGIIEEDSIIIDAKSGVSGAGKTPTTMTHFPELYDNLRIYKVNEHQHIPEIEQMLAEWNRETKPITFSTHLIPISRGIMVTLYAKVKREMEIEQLQQLYEEAYEQSAFIRIRMQGEFPSPKEVRGSNYCDMGIAYDERTGRVTVVSVIDNMMKGAAGQAIQNANIVAGLEETIGLQHMPLYL</sequence>
<keyword id="KW-0028">Amino-acid biosynthesis</keyword>
<keyword id="KW-0055">Arginine biosynthesis</keyword>
<keyword id="KW-0963">Cytoplasm</keyword>
<keyword id="KW-0521">NADP</keyword>
<keyword id="KW-0560">Oxidoreductase</keyword>
<gene>
    <name evidence="1" type="primary">argC</name>
    <name type="ordered locus">BCA_4245</name>
</gene>
<comment type="function">
    <text evidence="1">Catalyzes the NADPH-dependent reduction of N-acetyl-5-glutamyl phosphate to yield N-acetyl-L-glutamate 5-semialdehyde.</text>
</comment>
<comment type="catalytic activity">
    <reaction evidence="1">
        <text>N-acetyl-L-glutamate 5-semialdehyde + phosphate + NADP(+) = N-acetyl-L-glutamyl 5-phosphate + NADPH + H(+)</text>
        <dbReference type="Rhea" id="RHEA:21588"/>
        <dbReference type="ChEBI" id="CHEBI:15378"/>
        <dbReference type="ChEBI" id="CHEBI:29123"/>
        <dbReference type="ChEBI" id="CHEBI:43474"/>
        <dbReference type="ChEBI" id="CHEBI:57783"/>
        <dbReference type="ChEBI" id="CHEBI:57936"/>
        <dbReference type="ChEBI" id="CHEBI:58349"/>
        <dbReference type="EC" id="1.2.1.38"/>
    </reaction>
</comment>
<comment type="pathway">
    <text evidence="1">Amino-acid biosynthesis; L-arginine biosynthesis; N(2)-acetyl-L-ornithine from L-glutamate: step 3/4.</text>
</comment>
<comment type="subcellular location">
    <subcellularLocation>
        <location evidence="1">Cytoplasm</location>
    </subcellularLocation>
</comment>
<comment type="similarity">
    <text evidence="1">Belongs to the NAGSA dehydrogenase family. Type 1 subfamily.</text>
</comment>
<dbReference type="EC" id="1.2.1.38" evidence="1"/>
<dbReference type="EMBL" id="CP001407">
    <property type="protein sequence ID" value="ACO27361.1"/>
    <property type="molecule type" value="Genomic_DNA"/>
</dbReference>
<dbReference type="RefSeq" id="WP_000861222.1">
    <property type="nucleotide sequence ID" value="NZ_CP009318.1"/>
</dbReference>
<dbReference type="SMR" id="C1ER06"/>
<dbReference type="KEGG" id="bcx:BCA_4245"/>
<dbReference type="PATRIC" id="fig|572264.18.peg.4196"/>
<dbReference type="UniPathway" id="UPA00068">
    <property type="reaction ID" value="UER00108"/>
</dbReference>
<dbReference type="Proteomes" id="UP000002210">
    <property type="component" value="Chromosome"/>
</dbReference>
<dbReference type="GO" id="GO:0005737">
    <property type="term" value="C:cytoplasm"/>
    <property type="evidence" value="ECO:0007669"/>
    <property type="project" value="UniProtKB-SubCell"/>
</dbReference>
<dbReference type="GO" id="GO:0003942">
    <property type="term" value="F:N-acetyl-gamma-glutamyl-phosphate reductase activity"/>
    <property type="evidence" value="ECO:0007669"/>
    <property type="project" value="UniProtKB-UniRule"/>
</dbReference>
<dbReference type="GO" id="GO:0051287">
    <property type="term" value="F:NAD binding"/>
    <property type="evidence" value="ECO:0007669"/>
    <property type="project" value="InterPro"/>
</dbReference>
<dbReference type="GO" id="GO:0070401">
    <property type="term" value="F:NADP+ binding"/>
    <property type="evidence" value="ECO:0007669"/>
    <property type="project" value="InterPro"/>
</dbReference>
<dbReference type="GO" id="GO:0006526">
    <property type="term" value="P:L-arginine biosynthetic process"/>
    <property type="evidence" value="ECO:0007669"/>
    <property type="project" value="UniProtKB-UniRule"/>
</dbReference>
<dbReference type="CDD" id="cd23934">
    <property type="entry name" value="AGPR_1_C"/>
    <property type="match status" value="1"/>
</dbReference>
<dbReference type="CDD" id="cd17895">
    <property type="entry name" value="AGPR_1_N"/>
    <property type="match status" value="1"/>
</dbReference>
<dbReference type="FunFam" id="3.30.360.10:FF:000014">
    <property type="entry name" value="N-acetyl-gamma-glutamyl-phosphate reductase"/>
    <property type="match status" value="1"/>
</dbReference>
<dbReference type="FunFam" id="3.40.50.720:FF:000117">
    <property type="entry name" value="N-acetyl-gamma-glutamyl-phosphate reductase"/>
    <property type="match status" value="1"/>
</dbReference>
<dbReference type="Gene3D" id="3.30.360.10">
    <property type="entry name" value="Dihydrodipicolinate Reductase, domain 2"/>
    <property type="match status" value="1"/>
</dbReference>
<dbReference type="Gene3D" id="3.40.50.720">
    <property type="entry name" value="NAD(P)-binding Rossmann-like Domain"/>
    <property type="match status" value="1"/>
</dbReference>
<dbReference type="HAMAP" id="MF_00150">
    <property type="entry name" value="ArgC_type1"/>
    <property type="match status" value="1"/>
</dbReference>
<dbReference type="InterPro" id="IPR023013">
    <property type="entry name" value="AGPR_AS"/>
</dbReference>
<dbReference type="InterPro" id="IPR000706">
    <property type="entry name" value="AGPR_type-1"/>
</dbReference>
<dbReference type="InterPro" id="IPR036291">
    <property type="entry name" value="NAD(P)-bd_dom_sf"/>
</dbReference>
<dbReference type="InterPro" id="IPR050085">
    <property type="entry name" value="NAGSA_dehydrogenase"/>
</dbReference>
<dbReference type="InterPro" id="IPR000534">
    <property type="entry name" value="Semialdehyde_DH_NAD-bd"/>
</dbReference>
<dbReference type="NCBIfam" id="TIGR01850">
    <property type="entry name" value="argC"/>
    <property type="match status" value="1"/>
</dbReference>
<dbReference type="PANTHER" id="PTHR32338:SF10">
    <property type="entry name" value="N-ACETYL-GAMMA-GLUTAMYL-PHOSPHATE REDUCTASE, CHLOROPLASTIC-RELATED"/>
    <property type="match status" value="1"/>
</dbReference>
<dbReference type="PANTHER" id="PTHR32338">
    <property type="entry name" value="N-ACETYL-GAMMA-GLUTAMYL-PHOSPHATE REDUCTASE, CHLOROPLASTIC-RELATED-RELATED"/>
    <property type="match status" value="1"/>
</dbReference>
<dbReference type="Pfam" id="PF01118">
    <property type="entry name" value="Semialdhyde_dh"/>
    <property type="match status" value="1"/>
</dbReference>
<dbReference type="Pfam" id="PF22698">
    <property type="entry name" value="Semialdhyde_dhC_1"/>
    <property type="match status" value="1"/>
</dbReference>
<dbReference type="SMART" id="SM00859">
    <property type="entry name" value="Semialdhyde_dh"/>
    <property type="match status" value="1"/>
</dbReference>
<dbReference type="SUPFAM" id="SSF55347">
    <property type="entry name" value="Glyceraldehyde-3-phosphate dehydrogenase-like, C-terminal domain"/>
    <property type="match status" value="1"/>
</dbReference>
<dbReference type="SUPFAM" id="SSF51735">
    <property type="entry name" value="NAD(P)-binding Rossmann-fold domains"/>
    <property type="match status" value="1"/>
</dbReference>
<dbReference type="PROSITE" id="PS01224">
    <property type="entry name" value="ARGC"/>
    <property type="match status" value="1"/>
</dbReference>